<name>TELL_STAEQ</name>
<dbReference type="EMBL" id="CP000029">
    <property type="protein sequence ID" value="AAW54316.1"/>
    <property type="molecule type" value="Genomic_DNA"/>
</dbReference>
<dbReference type="RefSeq" id="WP_002486096.1">
    <property type="nucleotide sequence ID" value="NC_002976.3"/>
</dbReference>
<dbReference type="SMR" id="Q5HPD6"/>
<dbReference type="STRING" id="176279.SERP0976"/>
<dbReference type="KEGG" id="ser:SERP0976"/>
<dbReference type="eggNOG" id="COG3853">
    <property type="taxonomic scope" value="Bacteria"/>
</dbReference>
<dbReference type="HOGENOM" id="CLU_032111_0_0_9"/>
<dbReference type="Proteomes" id="UP000000531">
    <property type="component" value="Chromosome"/>
</dbReference>
<dbReference type="InterPro" id="IPR008863">
    <property type="entry name" value="Toxic_anion-R_TelA"/>
</dbReference>
<dbReference type="PANTHER" id="PTHR38432">
    <property type="entry name" value="TELA-LIKE PROTEIN SAOUHSC_01408"/>
    <property type="match status" value="1"/>
</dbReference>
<dbReference type="PANTHER" id="PTHR38432:SF1">
    <property type="entry name" value="TELA-LIKE PROTEIN SAOUHSC_01408"/>
    <property type="match status" value="1"/>
</dbReference>
<dbReference type="Pfam" id="PF05816">
    <property type="entry name" value="TelA"/>
    <property type="match status" value="1"/>
</dbReference>
<dbReference type="PIRSF" id="PIRSF026508">
    <property type="entry name" value="TelA"/>
    <property type="match status" value="1"/>
</dbReference>
<protein>
    <recommendedName>
        <fullName>TelA-like protein SERP0976</fullName>
    </recommendedName>
</protein>
<reference key="1">
    <citation type="journal article" date="2005" name="J. Bacteriol.">
        <title>Insights on evolution of virulence and resistance from the complete genome analysis of an early methicillin-resistant Staphylococcus aureus strain and a biofilm-producing methicillin-resistant Staphylococcus epidermidis strain.</title>
        <authorList>
            <person name="Gill S.R."/>
            <person name="Fouts D.E."/>
            <person name="Archer G.L."/>
            <person name="Mongodin E.F."/>
            <person name="DeBoy R.T."/>
            <person name="Ravel J."/>
            <person name="Paulsen I.T."/>
            <person name="Kolonay J.F."/>
            <person name="Brinkac L.M."/>
            <person name="Beanan M.J."/>
            <person name="Dodson R.J."/>
            <person name="Daugherty S.C."/>
            <person name="Madupu R."/>
            <person name="Angiuoli S.V."/>
            <person name="Durkin A.S."/>
            <person name="Haft D.H."/>
            <person name="Vamathevan J.J."/>
            <person name="Khouri H."/>
            <person name="Utterback T.R."/>
            <person name="Lee C."/>
            <person name="Dimitrov G."/>
            <person name="Jiang L."/>
            <person name="Qin H."/>
            <person name="Weidman J."/>
            <person name="Tran K."/>
            <person name="Kang K.H."/>
            <person name="Hance I.R."/>
            <person name="Nelson K.E."/>
            <person name="Fraser C.M."/>
        </authorList>
    </citation>
    <scope>NUCLEOTIDE SEQUENCE [LARGE SCALE GENOMIC DNA]</scope>
    <source>
        <strain>ATCC 35984 / DSM 28319 / BCRC 17069 / CCUG 31568 / BM 3577 / RP62A</strain>
    </source>
</reference>
<feature type="chain" id="PRO_0000172809" description="TelA-like protein SERP0976">
    <location>
        <begin position="1"/>
        <end position="376"/>
    </location>
</feature>
<sequence length="376" mass="43441">MVSEQSSNRSHPLDYYMDNQSTDHHTIAEDLEMQLTENDKQRIKSISEQIEPLNHEGLLKYGANLQQKMSHFSHQILDDVQSKDMGPVGETLSQLMGKLKSVNPNDINPEKQSRLKRLFKRTKASINEVFSRMQSVSSQIDRITIQLEKHKDQLTKDVEFLDQLYQENKTYFDNVSLYILAAQKKKKEILTETIPQLREKAHQTGNQMDIQATADMEQFVDRLDKRIYDLQLSRQIAIQTAPQIRMIQNVNQALAEKIQSSILTSIPLWKNQMAIALTLMRQRNAVSAQRSVTDTTNELLTQNASMLKKNAIETAAENERGIVDIETLKTTQNDIIETIEQTLQIQEDGRQKRQVAEKELNELEQDLKQHLLSMRK</sequence>
<gene>
    <name type="ordered locus">SERP0976</name>
</gene>
<accession>Q5HPD6</accession>
<evidence type="ECO:0000305" key="1"/>
<comment type="similarity">
    <text evidence="1">Belongs to the TelA family.</text>
</comment>
<proteinExistence type="inferred from homology"/>
<organism>
    <name type="scientific">Staphylococcus epidermidis (strain ATCC 35984 / DSM 28319 / BCRC 17069 / CCUG 31568 / BM 3577 / RP62A)</name>
    <dbReference type="NCBI Taxonomy" id="176279"/>
    <lineage>
        <taxon>Bacteria</taxon>
        <taxon>Bacillati</taxon>
        <taxon>Bacillota</taxon>
        <taxon>Bacilli</taxon>
        <taxon>Bacillales</taxon>
        <taxon>Staphylococcaceae</taxon>
        <taxon>Staphylococcus</taxon>
    </lineage>
</organism>
<keyword id="KW-1185">Reference proteome</keyword>